<name>R146B_BOVIN</name>
<evidence type="ECO:0000250" key="1"/>
<evidence type="ECO:0000250" key="2">
    <source>
        <dbReference type="UniProtKB" id="Q5XIK5"/>
    </source>
</evidence>
<evidence type="ECO:0000250" key="3">
    <source>
        <dbReference type="UniProtKB" id="Q9NTX7"/>
    </source>
</evidence>
<evidence type="ECO:0000255" key="4">
    <source>
        <dbReference type="PROSITE-ProRule" id="PRU00175"/>
    </source>
</evidence>
<evidence type="ECO:0000255" key="5">
    <source>
        <dbReference type="PROSITE-ProRule" id="PRU00248"/>
    </source>
</evidence>
<evidence type="ECO:0000256" key="6">
    <source>
        <dbReference type="SAM" id="MobiDB-lite"/>
    </source>
</evidence>
<evidence type="ECO:0000305" key="7"/>
<keyword id="KW-0963">Cytoplasm</keyword>
<keyword id="KW-1017">Isopeptide bond</keyword>
<keyword id="KW-0479">Metal-binding</keyword>
<keyword id="KW-0597">Phosphoprotein</keyword>
<keyword id="KW-1185">Reference proteome</keyword>
<keyword id="KW-0808">Transferase</keyword>
<keyword id="KW-0832">Ubl conjugation</keyword>
<keyword id="KW-0833">Ubl conjugation pathway</keyword>
<keyword id="KW-0879">Wnt signaling pathway</keyword>
<keyword id="KW-0862">Zinc</keyword>
<keyword id="KW-0863">Zinc-finger</keyword>
<dbReference type="EC" id="2.3.2.27"/>
<dbReference type="EMBL" id="BC102139">
    <property type="protein sequence ID" value="AAI02140.1"/>
    <property type="molecule type" value="mRNA"/>
</dbReference>
<dbReference type="RefSeq" id="NP_001070448.1">
    <property type="nucleotide sequence ID" value="NM_001076980.1"/>
</dbReference>
<dbReference type="RefSeq" id="XP_005210757.1">
    <property type="nucleotide sequence ID" value="XM_005210700.1"/>
</dbReference>
<dbReference type="BMRB" id="Q3T139"/>
<dbReference type="SMR" id="Q3T139"/>
<dbReference type="FunCoup" id="Q3T139">
    <property type="interactions" value="1792"/>
</dbReference>
<dbReference type="STRING" id="9913.ENSBTAP00000037915"/>
<dbReference type="PaxDb" id="9913-ENSBTAP00000037915"/>
<dbReference type="Ensembl" id="ENSBTAT00000038099.5">
    <property type="protein sequence ID" value="ENSBTAP00000037915.4"/>
    <property type="gene ID" value="ENSBTAG00000034531.4"/>
</dbReference>
<dbReference type="GeneID" id="767901"/>
<dbReference type="KEGG" id="bta:767901"/>
<dbReference type="CTD" id="81847"/>
<dbReference type="VEuPathDB" id="HostDB:ENSBTAG00000034531"/>
<dbReference type="eggNOG" id="KOG0824">
    <property type="taxonomic scope" value="Eukaryota"/>
</dbReference>
<dbReference type="GeneTree" id="ENSGT00390000000358"/>
<dbReference type="HOGENOM" id="CLU_067425_0_0_1"/>
<dbReference type="InParanoid" id="Q3T139"/>
<dbReference type="OMA" id="KMAGCGE"/>
<dbReference type="OrthoDB" id="10065815at2759"/>
<dbReference type="TreeFam" id="TF318925"/>
<dbReference type="Reactome" id="R-BTA-201681">
    <property type="pathway name" value="TCF dependent signaling in response to WNT"/>
</dbReference>
<dbReference type="Reactome" id="R-BTA-4641257">
    <property type="pathway name" value="Degradation of AXIN"/>
</dbReference>
<dbReference type="Reactome" id="R-BTA-5689880">
    <property type="pathway name" value="Ub-specific processing proteases"/>
</dbReference>
<dbReference type="Reactome" id="R-BTA-8948751">
    <property type="pathway name" value="Regulation of PTEN stability and activity"/>
</dbReference>
<dbReference type="UniPathway" id="UPA00143"/>
<dbReference type="Proteomes" id="UP000009136">
    <property type="component" value="Chromosome 9"/>
</dbReference>
<dbReference type="Bgee" id="ENSBTAG00000034531">
    <property type="expression patterns" value="Expressed in cerebellum and 101 other cell types or tissues"/>
</dbReference>
<dbReference type="GO" id="GO:0005737">
    <property type="term" value="C:cytoplasm"/>
    <property type="evidence" value="ECO:0000318"/>
    <property type="project" value="GO_Central"/>
</dbReference>
<dbReference type="GO" id="GO:0005829">
    <property type="term" value="C:cytosol"/>
    <property type="evidence" value="ECO:0000250"/>
    <property type="project" value="UniProtKB"/>
</dbReference>
<dbReference type="GO" id="GO:0005654">
    <property type="term" value="C:nucleoplasm"/>
    <property type="evidence" value="ECO:0007669"/>
    <property type="project" value="Ensembl"/>
</dbReference>
<dbReference type="GO" id="GO:0005634">
    <property type="term" value="C:nucleus"/>
    <property type="evidence" value="ECO:0000318"/>
    <property type="project" value="GO_Central"/>
</dbReference>
<dbReference type="GO" id="GO:0005886">
    <property type="term" value="C:plasma membrane"/>
    <property type="evidence" value="ECO:0007669"/>
    <property type="project" value="Ensembl"/>
</dbReference>
<dbReference type="GO" id="GO:0072572">
    <property type="term" value="F:poly-ADP-D-ribose binding"/>
    <property type="evidence" value="ECO:0000250"/>
    <property type="project" value="UniProtKB"/>
</dbReference>
<dbReference type="GO" id="GO:0061630">
    <property type="term" value="F:ubiquitin protein ligase activity"/>
    <property type="evidence" value="ECO:0007669"/>
    <property type="project" value="InterPro"/>
</dbReference>
<dbReference type="GO" id="GO:0004842">
    <property type="term" value="F:ubiquitin-protein transferase activity"/>
    <property type="evidence" value="ECO:0000250"/>
    <property type="project" value="UniProtKB"/>
</dbReference>
<dbReference type="GO" id="GO:0008270">
    <property type="term" value="F:zinc ion binding"/>
    <property type="evidence" value="ECO:0007669"/>
    <property type="project" value="UniProtKB-KW"/>
</dbReference>
<dbReference type="GO" id="GO:0090263">
    <property type="term" value="P:positive regulation of canonical Wnt signaling pathway"/>
    <property type="evidence" value="ECO:0000250"/>
    <property type="project" value="UniProtKB"/>
</dbReference>
<dbReference type="GO" id="GO:0051865">
    <property type="term" value="P:protein autoubiquitination"/>
    <property type="evidence" value="ECO:0000250"/>
    <property type="project" value="UniProtKB"/>
</dbReference>
<dbReference type="GO" id="GO:0070936">
    <property type="term" value="P:protein K48-linked ubiquitination"/>
    <property type="evidence" value="ECO:0000250"/>
    <property type="project" value="UniProtKB"/>
</dbReference>
<dbReference type="GO" id="GO:0006511">
    <property type="term" value="P:ubiquitin-dependent protein catabolic process"/>
    <property type="evidence" value="ECO:0000250"/>
    <property type="project" value="UniProtKB"/>
</dbReference>
<dbReference type="GO" id="GO:0016055">
    <property type="term" value="P:Wnt signaling pathway"/>
    <property type="evidence" value="ECO:0007669"/>
    <property type="project" value="UniProtKB-KW"/>
</dbReference>
<dbReference type="CDD" id="cd16546">
    <property type="entry name" value="RING-HC_RNF146"/>
    <property type="match status" value="1"/>
</dbReference>
<dbReference type="FunFam" id="3.30.40.10:FF:000204">
    <property type="entry name" value="E3 ubiquitin-protein ligase RNF146"/>
    <property type="match status" value="1"/>
</dbReference>
<dbReference type="FunFam" id="3.30.720.50:FF:000003">
    <property type="entry name" value="E3 ubiquitin-protein ligase RNF146"/>
    <property type="match status" value="1"/>
</dbReference>
<dbReference type="Gene3D" id="3.30.720.50">
    <property type="match status" value="1"/>
</dbReference>
<dbReference type="Gene3D" id="3.30.40.10">
    <property type="entry name" value="Zinc/RING finger domain, C3HC4 (zinc finger)"/>
    <property type="match status" value="1"/>
</dbReference>
<dbReference type="InterPro" id="IPR044110">
    <property type="entry name" value="RING-HC_RNF146"/>
</dbReference>
<dbReference type="InterPro" id="IPR033509">
    <property type="entry name" value="RNF146"/>
</dbReference>
<dbReference type="InterPro" id="IPR018123">
    <property type="entry name" value="WWE-dom_subgr"/>
</dbReference>
<dbReference type="InterPro" id="IPR004170">
    <property type="entry name" value="WWE_dom"/>
</dbReference>
<dbReference type="InterPro" id="IPR037197">
    <property type="entry name" value="WWE_dom_sf"/>
</dbReference>
<dbReference type="InterPro" id="IPR001841">
    <property type="entry name" value="Znf_RING"/>
</dbReference>
<dbReference type="InterPro" id="IPR013083">
    <property type="entry name" value="Znf_RING/FYVE/PHD"/>
</dbReference>
<dbReference type="InterPro" id="IPR017907">
    <property type="entry name" value="Znf_RING_CS"/>
</dbReference>
<dbReference type="PANTHER" id="PTHR13417">
    <property type="entry name" value="E3 UBIQUITIN-PROTEIN LIGASE RNF146"/>
    <property type="match status" value="1"/>
</dbReference>
<dbReference type="PANTHER" id="PTHR13417:SF2">
    <property type="entry name" value="E3 UBIQUITIN-PROTEIN LIGASE RNF146"/>
    <property type="match status" value="1"/>
</dbReference>
<dbReference type="Pfam" id="PF02825">
    <property type="entry name" value="WWE"/>
    <property type="match status" value="1"/>
</dbReference>
<dbReference type="Pfam" id="PF13920">
    <property type="entry name" value="zf-C3HC4_3"/>
    <property type="match status" value="1"/>
</dbReference>
<dbReference type="SMART" id="SM00184">
    <property type="entry name" value="RING"/>
    <property type="match status" value="1"/>
</dbReference>
<dbReference type="SMART" id="SM00678">
    <property type="entry name" value="WWE"/>
    <property type="match status" value="1"/>
</dbReference>
<dbReference type="SUPFAM" id="SSF57850">
    <property type="entry name" value="RING/U-box"/>
    <property type="match status" value="1"/>
</dbReference>
<dbReference type="SUPFAM" id="SSF117839">
    <property type="entry name" value="WWE domain"/>
    <property type="match status" value="1"/>
</dbReference>
<dbReference type="PROSITE" id="PS50918">
    <property type="entry name" value="WWE"/>
    <property type="match status" value="1"/>
</dbReference>
<dbReference type="PROSITE" id="PS00518">
    <property type="entry name" value="ZF_RING_1"/>
    <property type="match status" value="1"/>
</dbReference>
<dbReference type="PROSITE" id="PS50089">
    <property type="entry name" value="ZF_RING_2"/>
    <property type="match status" value="1"/>
</dbReference>
<sequence length="347" mass="37616">MMAGCGEIDHSINMLPTNRKANESCSNTAPSLTVPECAICLQTCVHPVSLPCKHVFCYLCVKGASWLGKRCALCRQEIPEDFLDKPTLLSPEELKAASRGNGEYAWYYEGRNGWWQYDERTSRELEDAFSKGKKSTEMLIAGFLYVADLENMVQYRRNEHGRRRKIKRDIIDIPKKGVAGLRLDCDANTVNLARESSADGADSVPAQSGASVQSSSVRPLTSVDGQLTSPATPSPDAGTSLEDSFAHLQLGGDSIAERSHRGEGEEEHESPSSGRVPAPDTSIEETESDASSDSEDVSALVAQHSLTQQRLLVPNPSQTVSDRSVAAGGTVSVRSRRPDGQCTVTEV</sequence>
<feature type="chain" id="PRO_0000409503" description="E3 ubiquitin-protein ligase RNF146-B">
    <location>
        <begin position="1"/>
        <end position="347"/>
    </location>
</feature>
<feature type="domain" description="WWE" evidence="5">
    <location>
        <begin position="92"/>
        <end position="168"/>
    </location>
</feature>
<feature type="zinc finger region" description="RING-type" evidence="4">
    <location>
        <begin position="37"/>
        <end position="75"/>
    </location>
</feature>
<feature type="region of interest" description="Disordered" evidence="6">
    <location>
        <begin position="196"/>
        <end position="241"/>
    </location>
</feature>
<feature type="region of interest" description="Disordered" evidence="6">
    <location>
        <begin position="257"/>
        <end position="347"/>
    </location>
</feature>
<feature type="compositionally biased region" description="Low complexity" evidence="6">
    <location>
        <begin position="203"/>
        <end position="217"/>
    </location>
</feature>
<feature type="compositionally biased region" description="Acidic residues" evidence="6">
    <location>
        <begin position="282"/>
        <end position="296"/>
    </location>
</feature>
<feature type="compositionally biased region" description="Polar residues" evidence="6">
    <location>
        <begin position="304"/>
        <end position="322"/>
    </location>
</feature>
<feature type="modified residue" description="Phosphoserine" evidence="2">
    <location>
        <position position="288"/>
    </location>
</feature>
<feature type="modified residue" description="Phosphoserine" evidence="2">
    <location>
        <position position="292"/>
    </location>
</feature>
<feature type="cross-link" description="Glycyl lysine isopeptide (Lys-Gly) (interchain with G-Cter in ubiquitin)" evidence="3">
    <location>
        <position position="85"/>
    </location>
</feature>
<feature type="cross-link" description="Glycyl lysine isopeptide (Lys-Gly) (interchain with G-Cter in ubiquitin)" evidence="3">
    <location>
        <position position="95"/>
    </location>
</feature>
<feature type="cross-link" description="Glycyl lysine isopeptide (Lys-Gly) (interchain with G-Cter in ubiquitin)" evidence="3">
    <location>
        <position position="131"/>
    </location>
</feature>
<feature type="cross-link" description="Glycyl lysine isopeptide (Lys-Gly) (interchain with G-Cter in ubiquitin)" evidence="3">
    <location>
        <position position="176"/>
    </location>
</feature>
<gene>
    <name type="primary">RNF146B</name>
</gene>
<accession>Q3T139</accession>
<proteinExistence type="evidence at transcript level"/>
<protein>
    <recommendedName>
        <fullName>E3 ubiquitin-protein ligase RNF146-B</fullName>
        <ecNumber>2.3.2.27</ecNumber>
    </recommendedName>
    <alternativeName>
        <fullName>RING finger protein 146-B</fullName>
    </alternativeName>
    <alternativeName>
        <fullName evidence="7">RING-type E3 ubiquitin transferase RNF146-B</fullName>
    </alternativeName>
</protein>
<reference key="1">
    <citation type="submission" date="2005-08" db="EMBL/GenBank/DDBJ databases">
        <authorList>
            <consortium name="NIH - Mammalian Gene Collection (MGC) project"/>
        </authorList>
    </citation>
    <scope>NUCLEOTIDE SEQUENCE [LARGE SCALE MRNA]</scope>
    <source>
        <strain>Crossbred X Angus</strain>
        <tissue>Ileum</tissue>
    </source>
</reference>
<organism>
    <name type="scientific">Bos taurus</name>
    <name type="common">Bovine</name>
    <dbReference type="NCBI Taxonomy" id="9913"/>
    <lineage>
        <taxon>Eukaryota</taxon>
        <taxon>Metazoa</taxon>
        <taxon>Chordata</taxon>
        <taxon>Craniata</taxon>
        <taxon>Vertebrata</taxon>
        <taxon>Euteleostomi</taxon>
        <taxon>Mammalia</taxon>
        <taxon>Eutheria</taxon>
        <taxon>Laurasiatheria</taxon>
        <taxon>Artiodactyla</taxon>
        <taxon>Ruminantia</taxon>
        <taxon>Pecora</taxon>
        <taxon>Bovidae</taxon>
        <taxon>Bovinae</taxon>
        <taxon>Bos</taxon>
    </lineage>
</organism>
<comment type="function">
    <text evidence="1">E3 ubiquitin-protein ligase that specifically binds poly-ADP-ribosylated proteins and mediates their ubiquitination and subsequent degradation. Acts as an activator of the Wnt signaling pathway by mediating the ubiquitination of poly-ADP-ribosylated AXIN1 and AXIN2, 2 key components of the beta-catenin destruction complex. Acts in cooperation with tankyrase proteins (TNKS and TNKS2), which mediate poly-ADP-ribosylation of target proteins AXIN1, AXIN2, BLZF1, CASC3, TNKS and TNKS2. Recognizes and binds tankyrase-dependent poly-ADP-ribosylated proteins via its WWE domain and mediates their ubiquitination (By similarity).</text>
</comment>
<comment type="catalytic activity">
    <reaction>
        <text>S-ubiquitinyl-[E2 ubiquitin-conjugating enzyme]-L-cysteine + [acceptor protein]-L-lysine = [E2 ubiquitin-conjugating enzyme]-L-cysteine + N(6)-ubiquitinyl-[acceptor protein]-L-lysine.</text>
        <dbReference type="EC" id="2.3.2.27"/>
    </reaction>
</comment>
<comment type="pathway">
    <text>Protein modification; protein ubiquitination.</text>
</comment>
<comment type="subunit">
    <text evidence="1">Interacts with poly-ADP-ribosylated AXIN1, AXIN2, BLZF1 and CASC3.</text>
</comment>
<comment type="subcellular location">
    <subcellularLocation>
        <location evidence="1">Cytoplasm</location>
        <location evidence="1">Cytosol</location>
    </subcellularLocation>
</comment>
<comment type="domain">
    <text evidence="1">The WWE domain mediates non-covalent poly(ADP-ribose)-binding.</text>
</comment>
<comment type="PTM">
    <text evidence="1">Ubiquitinated; autoubiquitinated. Autoubiquitination is enhanced upon poly(ADP-ribose)-binding (By similarity).</text>
</comment>